<evidence type="ECO:0000255" key="1">
    <source>
        <dbReference type="HAMAP-Rule" id="MF_00144"/>
    </source>
</evidence>
<feature type="chain" id="PRO_0000349715" description="tRNA-specific 2-thiouridylase MnmA">
    <location>
        <begin position="1"/>
        <end position="400"/>
    </location>
</feature>
<feature type="region of interest" description="Interaction with tRNA" evidence="1">
    <location>
        <begin position="160"/>
        <end position="162"/>
    </location>
</feature>
<feature type="active site" description="Nucleophile" evidence="1">
    <location>
        <position position="113"/>
    </location>
</feature>
<feature type="active site" description="Cysteine persulfide intermediate" evidence="1">
    <location>
        <position position="210"/>
    </location>
</feature>
<feature type="binding site" evidence="1">
    <location>
        <begin position="19"/>
        <end position="26"/>
    </location>
    <ligand>
        <name>ATP</name>
        <dbReference type="ChEBI" id="CHEBI:30616"/>
    </ligand>
</feature>
<feature type="binding site" evidence="1">
    <location>
        <position position="45"/>
    </location>
    <ligand>
        <name>ATP</name>
        <dbReference type="ChEBI" id="CHEBI:30616"/>
    </ligand>
</feature>
<feature type="binding site" evidence="1">
    <location>
        <position position="137"/>
    </location>
    <ligand>
        <name>ATP</name>
        <dbReference type="ChEBI" id="CHEBI:30616"/>
    </ligand>
</feature>
<feature type="site" description="Interaction with tRNA" evidence="1">
    <location>
        <position position="138"/>
    </location>
</feature>
<feature type="site" description="Interaction with tRNA" evidence="1">
    <location>
        <position position="352"/>
    </location>
</feature>
<feature type="disulfide bond" description="Alternate" evidence="1">
    <location>
        <begin position="113"/>
        <end position="210"/>
    </location>
</feature>
<organism>
    <name type="scientific">Nitrobacter hamburgensis (strain DSM 10229 / NCIMB 13809 / X14)</name>
    <dbReference type="NCBI Taxonomy" id="323097"/>
    <lineage>
        <taxon>Bacteria</taxon>
        <taxon>Pseudomonadati</taxon>
        <taxon>Pseudomonadota</taxon>
        <taxon>Alphaproteobacteria</taxon>
        <taxon>Hyphomicrobiales</taxon>
        <taxon>Nitrobacteraceae</taxon>
        <taxon>Nitrobacter</taxon>
    </lineage>
</organism>
<comment type="function">
    <text evidence="1">Catalyzes the 2-thiolation of uridine at the wobble position (U34) of tRNA, leading to the formation of s(2)U34.</text>
</comment>
<comment type="catalytic activity">
    <reaction evidence="1">
        <text>S-sulfanyl-L-cysteinyl-[protein] + uridine(34) in tRNA + AH2 + ATP = 2-thiouridine(34) in tRNA + L-cysteinyl-[protein] + A + AMP + diphosphate + H(+)</text>
        <dbReference type="Rhea" id="RHEA:47032"/>
        <dbReference type="Rhea" id="RHEA-COMP:10131"/>
        <dbReference type="Rhea" id="RHEA-COMP:11726"/>
        <dbReference type="Rhea" id="RHEA-COMP:11727"/>
        <dbReference type="Rhea" id="RHEA-COMP:11728"/>
        <dbReference type="ChEBI" id="CHEBI:13193"/>
        <dbReference type="ChEBI" id="CHEBI:15378"/>
        <dbReference type="ChEBI" id="CHEBI:17499"/>
        <dbReference type="ChEBI" id="CHEBI:29950"/>
        <dbReference type="ChEBI" id="CHEBI:30616"/>
        <dbReference type="ChEBI" id="CHEBI:33019"/>
        <dbReference type="ChEBI" id="CHEBI:61963"/>
        <dbReference type="ChEBI" id="CHEBI:65315"/>
        <dbReference type="ChEBI" id="CHEBI:87170"/>
        <dbReference type="ChEBI" id="CHEBI:456215"/>
        <dbReference type="EC" id="2.8.1.13"/>
    </reaction>
</comment>
<comment type="subcellular location">
    <subcellularLocation>
        <location evidence="1">Cytoplasm</location>
    </subcellularLocation>
</comment>
<comment type="similarity">
    <text evidence="1">Belongs to the MnmA/TRMU family.</text>
</comment>
<name>MNMA_NITHX</name>
<proteinExistence type="inferred from homology"/>
<protein>
    <recommendedName>
        <fullName evidence="1">tRNA-specific 2-thiouridylase MnmA</fullName>
        <ecNumber evidence="1">2.8.1.13</ecNumber>
    </recommendedName>
</protein>
<accession>Q1QQB5</accession>
<sequence>MLNSLELEGRPQDTRVVVAMSGGVDSSVTAALLKSEGYDVVGITLQLYDHGAATHRKGACCAGQDIHDARNVAERLGIPHYVLDYENRFRETVIENFADSYASGETPVPCIECNRLVKFRDLLATARELGAAALATGHYVASHRMAGGSRALLCAADADRDQSYFLFATTREQLDFLRFPLGDMTKPQTRELARSFGLSVADKHDSQDICFVPTGRYTDIISQLKPNAMVSGDIVDLDGHVIGHHDGIVHFTVGQRRGLGIASGAPLYVLSLDAANRRVVVGPREALKMHRIILRDVNWIGDGALDRAVGAGLELFVRVRSTRKPQPAWLRAIDGRYEIELVAGEEGVSPGQACVFYDGLEGQARVLGGGFIARAMARRANEIAAQNGTPAQPLAAELRG</sequence>
<dbReference type="EC" id="2.8.1.13" evidence="1"/>
<dbReference type="EMBL" id="CP000319">
    <property type="protein sequence ID" value="ABE61582.1"/>
    <property type="molecule type" value="Genomic_DNA"/>
</dbReference>
<dbReference type="RefSeq" id="WP_011509285.1">
    <property type="nucleotide sequence ID" value="NC_007964.1"/>
</dbReference>
<dbReference type="SMR" id="Q1QQB5"/>
<dbReference type="STRING" id="323097.Nham_0695"/>
<dbReference type="KEGG" id="nha:Nham_0695"/>
<dbReference type="eggNOG" id="COG0482">
    <property type="taxonomic scope" value="Bacteria"/>
</dbReference>
<dbReference type="HOGENOM" id="CLU_035188_0_1_5"/>
<dbReference type="OrthoDB" id="9800696at2"/>
<dbReference type="Proteomes" id="UP000001953">
    <property type="component" value="Chromosome"/>
</dbReference>
<dbReference type="GO" id="GO:0005737">
    <property type="term" value="C:cytoplasm"/>
    <property type="evidence" value="ECO:0007669"/>
    <property type="project" value="UniProtKB-SubCell"/>
</dbReference>
<dbReference type="GO" id="GO:0005524">
    <property type="term" value="F:ATP binding"/>
    <property type="evidence" value="ECO:0007669"/>
    <property type="project" value="UniProtKB-KW"/>
</dbReference>
<dbReference type="GO" id="GO:0000049">
    <property type="term" value="F:tRNA binding"/>
    <property type="evidence" value="ECO:0007669"/>
    <property type="project" value="UniProtKB-KW"/>
</dbReference>
<dbReference type="GO" id="GO:0103016">
    <property type="term" value="F:tRNA-uridine 2-sulfurtransferase activity"/>
    <property type="evidence" value="ECO:0007669"/>
    <property type="project" value="UniProtKB-EC"/>
</dbReference>
<dbReference type="GO" id="GO:0002143">
    <property type="term" value="P:tRNA wobble position uridine thiolation"/>
    <property type="evidence" value="ECO:0007669"/>
    <property type="project" value="TreeGrafter"/>
</dbReference>
<dbReference type="CDD" id="cd01998">
    <property type="entry name" value="MnmA_TRMU-like"/>
    <property type="match status" value="1"/>
</dbReference>
<dbReference type="FunFam" id="2.30.30.280:FF:000001">
    <property type="entry name" value="tRNA-specific 2-thiouridylase MnmA"/>
    <property type="match status" value="1"/>
</dbReference>
<dbReference type="FunFam" id="3.40.50.620:FF:000115">
    <property type="entry name" value="tRNA-specific 2-thiouridylase MnmA"/>
    <property type="match status" value="1"/>
</dbReference>
<dbReference type="Gene3D" id="2.30.30.280">
    <property type="entry name" value="Adenine nucleotide alpha hydrolases-like domains"/>
    <property type="match status" value="1"/>
</dbReference>
<dbReference type="Gene3D" id="3.40.50.620">
    <property type="entry name" value="HUPs"/>
    <property type="match status" value="1"/>
</dbReference>
<dbReference type="Gene3D" id="2.40.30.10">
    <property type="entry name" value="Translation factors"/>
    <property type="match status" value="1"/>
</dbReference>
<dbReference type="HAMAP" id="MF_00144">
    <property type="entry name" value="tRNA_thiouridyl_MnmA"/>
    <property type="match status" value="1"/>
</dbReference>
<dbReference type="InterPro" id="IPR004506">
    <property type="entry name" value="MnmA-like"/>
</dbReference>
<dbReference type="InterPro" id="IPR046885">
    <property type="entry name" value="MnmA-like_C"/>
</dbReference>
<dbReference type="InterPro" id="IPR046884">
    <property type="entry name" value="MnmA-like_central"/>
</dbReference>
<dbReference type="InterPro" id="IPR023382">
    <property type="entry name" value="MnmA-like_central_sf"/>
</dbReference>
<dbReference type="InterPro" id="IPR014729">
    <property type="entry name" value="Rossmann-like_a/b/a_fold"/>
</dbReference>
<dbReference type="NCBIfam" id="NF001138">
    <property type="entry name" value="PRK00143.1"/>
    <property type="match status" value="1"/>
</dbReference>
<dbReference type="NCBIfam" id="TIGR00420">
    <property type="entry name" value="trmU"/>
    <property type="match status" value="1"/>
</dbReference>
<dbReference type="PANTHER" id="PTHR11933:SF5">
    <property type="entry name" value="MITOCHONDRIAL TRNA-SPECIFIC 2-THIOURIDYLASE 1"/>
    <property type="match status" value="1"/>
</dbReference>
<dbReference type="PANTHER" id="PTHR11933">
    <property type="entry name" value="TRNA 5-METHYLAMINOMETHYL-2-THIOURIDYLATE -METHYLTRANSFERASE"/>
    <property type="match status" value="1"/>
</dbReference>
<dbReference type="Pfam" id="PF03054">
    <property type="entry name" value="tRNA_Me_trans"/>
    <property type="match status" value="1"/>
</dbReference>
<dbReference type="Pfam" id="PF20258">
    <property type="entry name" value="tRNA_Me_trans_C"/>
    <property type="match status" value="1"/>
</dbReference>
<dbReference type="Pfam" id="PF20259">
    <property type="entry name" value="tRNA_Me_trans_M"/>
    <property type="match status" value="1"/>
</dbReference>
<dbReference type="SUPFAM" id="SSF52402">
    <property type="entry name" value="Adenine nucleotide alpha hydrolases-like"/>
    <property type="match status" value="1"/>
</dbReference>
<gene>
    <name evidence="1" type="primary">mnmA</name>
    <name type="ordered locus">Nham_0695</name>
</gene>
<reference key="1">
    <citation type="submission" date="2006-03" db="EMBL/GenBank/DDBJ databases">
        <title>Complete sequence of chromosome of Nitrobacter hamburgensis X14.</title>
        <authorList>
            <consortium name="US DOE Joint Genome Institute"/>
            <person name="Copeland A."/>
            <person name="Lucas S."/>
            <person name="Lapidus A."/>
            <person name="Barry K."/>
            <person name="Detter J.C."/>
            <person name="Glavina del Rio T."/>
            <person name="Hammon N."/>
            <person name="Israni S."/>
            <person name="Dalin E."/>
            <person name="Tice H."/>
            <person name="Pitluck S."/>
            <person name="Chain P."/>
            <person name="Malfatti S."/>
            <person name="Shin M."/>
            <person name="Vergez L."/>
            <person name="Schmutz J."/>
            <person name="Larimer F."/>
            <person name="Land M."/>
            <person name="Hauser L."/>
            <person name="Kyrpides N."/>
            <person name="Ivanova N."/>
            <person name="Ward B."/>
            <person name="Arp D."/>
            <person name="Klotz M."/>
            <person name="Stein L."/>
            <person name="O'Mullan G."/>
            <person name="Starkenburg S."/>
            <person name="Sayavedra L."/>
            <person name="Poret-Peterson A.T."/>
            <person name="Gentry M.E."/>
            <person name="Bruce D."/>
            <person name="Richardson P."/>
        </authorList>
    </citation>
    <scope>NUCLEOTIDE SEQUENCE [LARGE SCALE GENOMIC DNA]</scope>
    <source>
        <strain>DSM 10229 / NCIMB 13809 / X14</strain>
    </source>
</reference>
<keyword id="KW-0067">ATP-binding</keyword>
<keyword id="KW-0963">Cytoplasm</keyword>
<keyword id="KW-1015">Disulfide bond</keyword>
<keyword id="KW-0547">Nucleotide-binding</keyword>
<keyword id="KW-1185">Reference proteome</keyword>
<keyword id="KW-0694">RNA-binding</keyword>
<keyword id="KW-0808">Transferase</keyword>
<keyword id="KW-0819">tRNA processing</keyword>
<keyword id="KW-0820">tRNA-binding</keyword>